<gene>
    <name type="ORF">SPCC306.11</name>
</gene>
<dbReference type="EMBL" id="CU329672">
    <property type="protein sequence ID" value="CAB41659.1"/>
    <property type="molecule type" value="Genomic_DNA"/>
</dbReference>
<dbReference type="PIR" id="T41288">
    <property type="entry name" value="T41288"/>
</dbReference>
<dbReference type="RefSeq" id="NP_587818.1">
    <property type="nucleotide sequence ID" value="NM_001022811.2"/>
</dbReference>
<dbReference type="SMR" id="Q9Y7R9"/>
<dbReference type="BioGRID" id="275452">
    <property type="interactions" value="35"/>
</dbReference>
<dbReference type="STRING" id="284812.Q9Y7R9"/>
<dbReference type="iPTMnet" id="Q9Y7R9"/>
<dbReference type="PaxDb" id="4896-SPCC306.11.1"/>
<dbReference type="EnsemblFungi" id="SPCC306.11.1">
    <property type="protein sequence ID" value="SPCC306.11.1:pep"/>
    <property type="gene ID" value="SPCC306.11"/>
</dbReference>
<dbReference type="KEGG" id="spo:2538873"/>
<dbReference type="PomBase" id="SPCC306.11"/>
<dbReference type="VEuPathDB" id="FungiDB:SPCC306.11"/>
<dbReference type="HOGENOM" id="CLU_1074250_0_0_1"/>
<dbReference type="InParanoid" id="Q9Y7R9"/>
<dbReference type="OMA" id="TQYPVNC"/>
<dbReference type="PRO" id="PR:Q9Y7R9"/>
<dbReference type="Proteomes" id="UP000002485">
    <property type="component" value="Chromosome III"/>
</dbReference>
<dbReference type="GO" id="GO:0070263">
    <property type="term" value="C:external side of fungal-type cell wall"/>
    <property type="evidence" value="ECO:0000303"/>
    <property type="project" value="PomBase"/>
</dbReference>
<dbReference type="GO" id="GO:0005576">
    <property type="term" value="C:extracellular region"/>
    <property type="evidence" value="ECO:0007669"/>
    <property type="project" value="UniProtKB-SubCell"/>
</dbReference>
<comment type="subcellular location">
    <subcellularLocation>
        <location evidence="2">Secreted</location>
    </subcellularLocation>
</comment>
<reference key="1">
    <citation type="journal article" date="2002" name="Nature">
        <title>The genome sequence of Schizosaccharomyces pombe.</title>
        <authorList>
            <person name="Wood V."/>
            <person name="Gwilliam R."/>
            <person name="Rajandream M.A."/>
            <person name="Lyne M.H."/>
            <person name="Lyne R."/>
            <person name="Stewart A."/>
            <person name="Sgouros J.G."/>
            <person name="Peat N."/>
            <person name="Hayles J."/>
            <person name="Baker S.G."/>
            <person name="Basham D."/>
            <person name="Bowman S."/>
            <person name="Brooks K."/>
            <person name="Brown D."/>
            <person name="Brown S."/>
            <person name="Chillingworth T."/>
            <person name="Churcher C.M."/>
            <person name="Collins M."/>
            <person name="Connor R."/>
            <person name="Cronin A."/>
            <person name="Davis P."/>
            <person name="Feltwell T."/>
            <person name="Fraser A."/>
            <person name="Gentles S."/>
            <person name="Goble A."/>
            <person name="Hamlin N."/>
            <person name="Harris D.E."/>
            <person name="Hidalgo J."/>
            <person name="Hodgson G."/>
            <person name="Holroyd S."/>
            <person name="Hornsby T."/>
            <person name="Howarth S."/>
            <person name="Huckle E.J."/>
            <person name="Hunt S."/>
            <person name="Jagels K."/>
            <person name="James K.D."/>
            <person name="Jones L."/>
            <person name="Jones M."/>
            <person name="Leather S."/>
            <person name="McDonald S."/>
            <person name="McLean J."/>
            <person name="Mooney P."/>
            <person name="Moule S."/>
            <person name="Mungall K.L."/>
            <person name="Murphy L.D."/>
            <person name="Niblett D."/>
            <person name="Odell C."/>
            <person name="Oliver K."/>
            <person name="O'Neil S."/>
            <person name="Pearson D."/>
            <person name="Quail M.A."/>
            <person name="Rabbinowitsch E."/>
            <person name="Rutherford K.M."/>
            <person name="Rutter S."/>
            <person name="Saunders D."/>
            <person name="Seeger K."/>
            <person name="Sharp S."/>
            <person name="Skelton J."/>
            <person name="Simmonds M.N."/>
            <person name="Squares R."/>
            <person name="Squares S."/>
            <person name="Stevens K."/>
            <person name="Taylor K."/>
            <person name="Taylor R.G."/>
            <person name="Tivey A."/>
            <person name="Walsh S.V."/>
            <person name="Warren T."/>
            <person name="Whitehead S."/>
            <person name="Woodward J.R."/>
            <person name="Volckaert G."/>
            <person name="Aert R."/>
            <person name="Robben J."/>
            <person name="Grymonprez B."/>
            <person name="Weltjens I."/>
            <person name="Vanstreels E."/>
            <person name="Rieger M."/>
            <person name="Schaefer M."/>
            <person name="Mueller-Auer S."/>
            <person name="Gabel C."/>
            <person name="Fuchs M."/>
            <person name="Duesterhoeft A."/>
            <person name="Fritzc C."/>
            <person name="Holzer E."/>
            <person name="Moestl D."/>
            <person name="Hilbert H."/>
            <person name="Borzym K."/>
            <person name="Langer I."/>
            <person name="Beck A."/>
            <person name="Lehrach H."/>
            <person name="Reinhardt R."/>
            <person name="Pohl T.M."/>
            <person name="Eger P."/>
            <person name="Zimmermann W."/>
            <person name="Wedler H."/>
            <person name="Wambutt R."/>
            <person name="Purnelle B."/>
            <person name="Goffeau A."/>
            <person name="Cadieu E."/>
            <person name="Dreano S."/>
            <person name="Gloux S."/>
            <person name="Lelaure V."/>
            <person name="Mottier S."/>
            <person name="Galibert F."/>
            <person name="Aves S.J."/>
            <person name="Xiang Z."/>
            <person name="Hunt C."/>
            <person name="Moore K."/>
            <person name="Hurst S.M."/>
            <person name="Lucas M."/>
            <person name="Rochet M."/>
            <person name="Gaillardin C."/>
            <person name="Tallada V.A."/>
            <person name="Garzon A."/>
            <person name="Thode G."/>
            <person name="Daga R.R."/>
            <person name="Cruzado L."/>
            <person name="Jimenez J."/>
            <person name="Sanchez M."/>
            <person name="del Rey F."/>
            <person name="Benito J."/>
            <person name="Dominguez A."/>
            <person name="Revuelta J.L."/>
            <person name="Moreno S."/>
            <person name="Armstrong J."/>
            <person name="Forsburg S.L."/>
            <person name="Cerutti L."/>
            <person name="Lowe T."/>
            <person name="McCombie W.R."/>
            <person name="Paulsen I."/>
            <person name="Potashkin J."/>
            <person name="Shpakovski G.V."/>
            <person name="Ussery D."/>
            <person name="Barrell B.G."/>
            <person name="Nurse P."/>
        </authorList>
    </citation>
    <scope>NUCLEOTIDE SEQUENCE [LARGE SCALE GENOMIC DNA]</scope>
    <source>
        <strain>972 / ATCC 24843</strain>
    </source>
</reference>
<sequence>MFAFASFAISAIFFLCSFSYVSSIKLCGIPGAPACKRREISLYKRATDTFPDLSSAIASTSYYNISEGTYCHVSGSNLCVSPDVIAICANHSTVLLNCPTVLGYPKGRGSACVETNSSYGLTRGLCQIGSSNYSTSANSSNFDNANVINVTTSVSSGSTSTHSKRSSGISLSYTNIVDQPILFTRDSSMDWSCNMTLCNTDYPYLVNTCFNGTQYPVNCNSALRTPFGGATCRNIGYKGQGICVYTNDSRIPVADDHVIVNTTSKINPNITSVFNYRDNAFLW</sequence>
<keyword id="KW-1185">Reference proteome</keyword>
<keyword id="KW-0964">Secreted</keyword>
<keyword id="KW-0732">Signal</keyword>
<protein>
    <recommendedName>
        <fullName>Uncharacterized protein C306.11</fullName>
    </recommendedName>
</protein>
<accession>Q9Y7R9</accession>
<proteinExistence type="inferred from homology"/>
<organism>
    <name type="scientific">Schizosaccharomyces pombe (strain 972 / ATCC 24843)</name>
    <name type="common">Fission yeast</name>
    <dbReference type="NCBI Taxonomy" id="284812"/>
    <lineage>
        <taxon>Eukaryota</taxon>
        <taxon>Fungi</taxon>
        <taxon>Dikarya</taxon>
        <taxon>Ascomycota</taxon>
        <taxon>Taphrinomycotina</taxon>
        <taxon>Schizosaccharomycetes</taxon>
        <taxon>Schizosaccharomycetales</taxon>
        <taxon>Schizosaccharomycetaceae</taxon>
        <taxon>Schizosaccharomyces</taxon>
    </lineage>
</organism>
<evidence type="ECO:0000255" key="1"/>
<evidence type="ECO:0000305" key="2"/>
<name>YJFB_SCHPO</name>
<feature type="signal peptide" evidence="1">
    <location>
        <begin position="1"/>
        <end position="23"/>
    </location>
</feature>
<feature type="chain" id="PRO_0000304040" description="Uncharacterized protein C306.11">
    <location>
        <begin position="24"/>
        <end position="283"/>
    </location>
</feature>